<accession>Q31LS2</accession>
<proteinExistence type="inferred from homology"/>
<name>UPPP_SYNE7</name>
<sequence length="288" mass="30868">MLIAVSSADRLDLWQAIVLGFVQGATEFLPISSTAHLKVVPVVLGWGDPGVAFTAVIQLGSIVAVLSYFRQDLTYVLRGLVSAVRRQDFRSEPAQMGLGILFGTIPILIGGLLIKRFIPDYDNSPLRSLAAIAIVSIVMGLLLGIAEQLSKHQRDLSQLRLADGLWMGFAQALALIPGVSRSGSTLTAGLFQGLKRDTAARFSFLLGIPAITIAGLVELKDLLEAGIDGSSLGVLAIGTLSSLIFSWLAIAWLLRFLRTHNTWSFVVYRIIFGGVILTAIATGTLQNI</sequence>
<feature type="chain" id="PRO_0000250276" description="Undecaprenyl-diphosphatase">
    <location>
        <begin position="1"/>
        <end position="288"/>
    </location>
</feature>
<feature type="transmembrane region" description="Helical" evidence="1">
    <location>
        <begin position="11"/>
        <end position="31"/>
    </location>
</feature>
<feature type="transmembrane region" description="Helical" evidence="1">
    <location>
        <begin position="49"/>
        <end position="69"/>
    </location>
</feature>
<feature type="transmembrane region" description="Helical" evidence="1">
    <location>
        <begin position="94"/>
        <end position="114"/>
    </location>
</feature>
<feature type="transmembrane region" description="Helical" evidence="1">
    <location>
        <begin position="129"/>
        <end position="149"/>
    </location>
</feature>
<feature type="transmembrane region" description="Helical" evidence="1">
    <location>
        <begin position="159"/>
        <end position="179"/>
    </location>
</feature>
<feature type="transmembrane region" description="Helical" evidence="1">
    <location>
        <begin position="199"/>
        <end position="219"/>
    </location>
</feature>
<feature type="transmembrane region" description="Helical" evidence="1">
    <location>
        <begin position="234"/>
        <end position="254"/>
    </location>
</feature>
<feature type="transmembrane region" description="Helical" evidence="1">
    <location>
        <begin position="265"/>
        <end position="285"/>
    </location>
</feature>
<dbReference type="EC" id="3.6.1.27" evidence="1"/>
<dbReference type="EMBL" id="CP000100">
    <property type="protein sequence ID" value="ABB57997.1"/>
    <property type="molecule type" value="Genomic_DNA"/>
</dbReference>
<dbReference type="RefSeq" id="WP_011378257.1">
    <property type="nucleotide sequence ID" value="NZ_JACJTX010000001.1"/>
</dbReference>
<dbReference type="SMR" id="Q31LS2"/>
<dbReference type="STRING" id="1140.Synpcc7942_1967"/>
<dbReference type="PaxDb" id="1140-Synpcc7942_1967"/>
<dbReference type="KEGG" id="syf:Synpcc7942_1967"/>
<dbReference type="eggNOG" id="COG1968">
    <property type="taxonomic scope" value="Bacteria"/>
</dbReference>
<dbReference type="HOGENOM" id="CLU_060296_1_0_3"/>
<dbReference type="OrthoDB" id="9808289at2"/>
<dbReference type="BioCyc" id="SYNEL:SYNPCC7942_1967-MONOMER"/>
<dbReference type="Proteomes" id="UP000889800">
    <property type="component" value="Chromosome"/>
</dbReference>
<dbReference type="GO" id="GO:0005886">
    <property type="term" value="C:plasma membrane"/>
    <property type="evidence" value="ECO:0007669"/>
    <property type="project" value="UniProtKB-SubCell"/>
</dbReference>
<dbReference type="GO" id="GO:0050380">
    <property type="term" value="F:undecaprenyl-diphosphatase activity"/>
    <property type="evidence" value="ECO:0007669"/>
    <property type="project" value="UniProtKB-UniRule"/>
</dbReference>
<dbReference type="GO" id="GO:0071555">
    <property type="term" value="P:cell wall organization"/>
    <property type="evidence" value="ECO:0007669"/>
    <property type="project" value="UniProtKB-KW"/>
</dbReference>
<dbReference type="GO" id="GO:0009252">
    <property type="term" value="P:peptidoglycan biosynthetic process"/>
    <property type="evidence" value="ECO:0007669"/>
    <property type="project" value="UniProtKB-KW"/>
</dbReference>
<dbReference type="GO" id="GO:0008360">
    <property type="term" value="P:regulation of cell shape"/>
    <property type="evidence" value="ECO:0007669"/>
    <property type="project" value="UniProtKB-KW"/>
</dbReference>
<dbReference type="GO" id="GO:0046677">
    <property type="term" value="P:response to antibiotic"/>
    <property type="evidence" value="ECO:0007669"/>
    <property type="project" value="UniProtKB-UniRule"/>
</dbReference>
<dbReference type="HAMAP" id="MF_01006">
    <property type="entry name" value="Undec_diphosphatase"/>
    <property type="match status" value="1"/>
</dbReference>
<dbReference type="InterPro" id="IPR003824">
    <property type="entry name" value="UppP"/>
</dbReference>
<dbReference type="NCBIfam" id="NF001394">
    <property type="entry name" value="PRK00281.2-5"/>
    <property type="match status" value="1"/>
</dbReference>
<dbReference type="NCBIfam" id="TIGR00753">
    <property type="entry name" value="undec_PP_bacA"/>
    <property type="match status" value="1"/>
</dbReference>
<dbReference type="PANTHER" id="PTHR30622">
    <property type="entry name" value="UNDECAPRENYL-DIPHOSPHATASE"/>
    <property type="match status" value="1"/>
</dbReference>
<dbReference type="PANTHER" id="PTHR30622:SF4">
    <property type="entry name" value="UNDECAPRENYL-DIPHOSPHATASE"/>
    <property type="match status" value="1"/>
</dbReference>
<dbReference type="Pfam" id="PF02673">
    <property type="entry name" value="BacA"/>
    <property type="match status" value="1"/>
</dbReference>
<evidence type="ECO:0000255" key="1">
    <source>
        <dbReference type="HAMAP-Rule" id="MF_01006"/>
    </source>
</evidence>
<comment type="function">
    <text evidence="1">Catalyzes the dephosphorylation of undecaprenyl diphosphate (UPP). Confers resistance to bacitracin.</text>
</comment>
<comment type="catalytic activity">
    <reaction evidence="1">
        <text>di-trans,octa-cis-undecaprenyl diphosphate + H2O = di-trans,octa-cis-undecaprenyl phosphate + phosphate + H(+)</text>
        <dbReference type="Rhea" id="RHEA:28094"/>
        <dbReference type="ChEBI" id="CHEBI:15377"/>
        <dbReference type="ChEBI" id="CHEBI:15378"/>
        <dbReference type="ChEBI" id="CHEBI:43474"/>
        <dbReference type="ChEBI" id="CHEBI:58405"/>
        <dbReference type="ChEBI" id="CHEBI:60392"/>
        <dbReference type="EC" id="3.6.1.27"/>
    </reaction>
</comment>
<comment type="subcellular location">
    <subcellularLocation>
        <location evidence="1">Cell inner membrane</location>
        <topology evidence="1">Multi-pass membrane protein</topology>
    </subcellularLocation>
</comment>
<comment type="miscellaneous">
    <text>Bacitracin is thought to be involved in the inhibition of peptidoglycan synthesis by sequestering undecaprenyl diphosphate, thereby reducing the pool of lipid carrier available.</text>
</comment>
<comment type="similarity">
    <text evidence="1">Belongs to the UppP family.</text>
</comment>
<keyword id="KW-0046">Antibiotic resistance</keyword>
<keyword id="KW-0997">Cell inner membrane</keyword>
<keyword id="KW-1003">Cell membrane</keyword>
<keyword id="KW-0133">Cell shape</keyword>
<keyword id="KW-0961">Cell wall biogenesis/degradation</keyword>
<keyword id="KW-0378">Hydrolase</keyword>
<keyword id="KW-0472">Membrane</keyword>
<keyword id="KW-0573">Peptidoglycan synthesis</keyword>
<keyword id="KW-1185">Reference proteome</keyword>
<keyword id="KW-0812">Transmembrane</keyword>
<keyword id="KW-1133">Transmembrane helix</keyword>
<organism>
    <name type="scientific">Synechococcus elongatus (strain ATCC 33912 / PCC 7942 / FACHB-805)</name>
    <name type="common">Anacystis nidulans R2</name>
    <dbReference type="NCBI Taxonomy" id="1140"/>
    <lineage>
        <taxon>Bacteria</taxon>
        <taxon>Bacillati</taxon>
        <taxon>Cyanobacteriota</taxon>
        <taxon>Cyanophyceae</taxon>
        <taxon>Synechococcales</taxon>
        <taxon>Synechococcaceae</taxon>
        <taxon>Synechococcus</taxon>
    </lineage>
</organism>
<protein>
    <recommendedName>
        <fullName evidence="1">Undecaprenyl-diphosphatase</fullName>
        <ecNumber evidence="1">3.6.1.27</ecNumber>
    </recommendedName>
    <alternativeName>
        <fullName evidence="1">Bacitracin resistance protein</fullName>
    </alternativeName>
    <alternativeName>
        <fullName evidence="1">Undecaprenyl pyrophosphate phosphatase</fullName>
    </alternativeName>
</protein>
<gene>
    <name evidence="1" type="primary">uppP</name>
    <name type="ordered locus">Synpcc7942_1967</name>
</gene>
<reference key="1">
    <citation type="submission" date="2005-08" db="EMBL/GenBank/DDBJ databases">
        <title>Complete sequence of chromosome 1 of Synechococcus elongatus PCC 7942.</title>
        <authorList>
            <consortium name="US DOE Joint Genome Institute"/>
            <person name="Copeland A."/>
            <person name="Lucas S."/>
            <person name="Lapidus A."/>
            <person name="Barry K."/>
            <person name="Detter J.C."/>
            <person name="Glavina T."/>
            <person name="Hammon N."/>
            <person name="Israni S."/>
            <person name="Pitluck S."/>
            <person name="Schmutz J."/>
            <person name="Larimer F."/>
            <person name="Land M."/>
            <person name="Kyrpides N."/>
            <person name="Lykidis A."/>
            <person name="Golden S."/>
            <person name="Richardson P."/>
        </authorList>
    </citation>
    <scope>NUCLEOTIDE SEQUENCE [LARGE SCALE GENOMIC DNA]</scope>
    <source>
        <strain>ATCC 33912 / PCC 7942 / FACHB-805</strain>
    </source>
</reference>